<gene>
    <name evidence="9" type="primary">sctL1</name>
    <name evidence="8" type="synonym">orgB</name>
    <name type="ordered locus">STM2869</name>
</gene>
<organism>
    <name type="scientific">Salmonella typhimurium (strain LT2 / SGSC1412 / ATCC 700720)</name>
    <dbReference type="NCBI Taxonomy" id="99287"/>
    <lineage>
        <taxon>Bacteria</taxon>
        <taxon>Pseudomonadati</taxon>
        <taxon>Pseudomonadota</taxon>
        <taxon>Gammaproteobacteria</taxon>
        <taxon>Enterobacterales</taxon>
        <taxon>Enterobacteriaceae</taxon>
        <taxon>Salmonella</taxon>
    </lineage>
</organism>
<feature type="chain" id="PRO_0000058083" description="SPI-1 type 3 secretion system stator protein">
    <location>
        <begin position="1"/>
        <end position="226"/>
    </location>
</feature>
<feature type="mutagenesis site" description="Disrupts interaction with SpaO/SctQ." evidence="4">
    <original>ILI</original>
    <variation>DDD</variation>
    <location>
        <begin position="17"/>
        <end position="19"/>
    </location>
</feature>
<feature type="strand" evidence="13">
    <location>
        <begin position="2"/>
        <end position="5"/>
    </location>
</feature>
<feature type="turn" evidence="13">
    <location>
        <begin position="15"/>
        <end position="17"/>
    </location>
</feature>
<feature type="helix" evidence="13">
    <location>
        <begin position="21"/>
        <end position="24"/>
    </location>
</feature>
<protein>
    <recommendedName>
        <fullName evidence="10">SPI-1 type 3 secretion system stator protein</fullName>
        <shortName evidence="10">T3SS-1 stator protein</shortName>
    </recommendedName>
    <alternativeName>
        <fullName>Oxygen-regulated invasion protein OrgB</fullName>
    </alternativeName>
</protein>
<dbReference type="EMBL" id="AE006468">
    <property type="protein sequence ID" value="AAL21749.1"/>
    <property type="molecule type" value="Genomic_DNA"/>
</dbReference>
<dbReference type="RefSeq" id="WP_000916654.1">
    <property type="nucleotide sequence ID" value="NC_003197.2"/>
</dbReference>
<dbReference type="PDB" id="4YX7">
    <property type="method" value="X-ray"/>
    <property type="resolution" value="2.00 A"/>
    <property type="chains" value="C/F=1-30"/>
</dbReference>
<dbReference type="PDB" id="4YXA">
    <property type="method" value="X-ray"/>
    <property type="resolution" value="2.35 A"/>
    <property type="chains" value="C/F=1-30"/>
</dbReference>
<dbReference type="PDBsum" id="4YX7"/>
<dbReference type="PDBsum" id="4YXA"/>
<dbReference type="SASBDB" id="P0CL45"/>
<dbReference type="SMR" id="P0CL45"/>
<dbReference type="STRING" id="99287.STM2869"/>
<dbReference type="PaxDb" id="99287-STM2869"/>
<dbReference type="DNASU" id="1254392"/>
<dbReference type="KEGG" id="stm:STM2869"/>
<dbReference type="PATRIC" id="fig|99287.12.peg.3025"/>
<dbReference type="HOGENOM" id="CLU_106719_0_0_6"/>
<dbReference type="OMA" id="DYICEWK"/>
<dbReference type="PhylomeDB" id="P0CL45"/>
<dbReference type="BioCyc" id="SENT99287:STM2869-MONOMER"/>
<dbReference type="Proteomes" id="UP000001014">
    <property type="component" value="Chromosome"/>
</dbReference>
<dbReference type="GO" id="GO:0005737">
    <property type="term" value="C:cytoplasm"/>
    <property type="evidence" value="ECO:0007669"/>
    <property type="project" value="UniProtKB-SubCell"/>
</dbReference>
<dbReference type="GO" id="GO:0015031">
    <property type="term" value="P:protein transport"/>
    <property type="evidence" value="ECO:0007669"/>
    <property type="project" value="UniProtKB-KW"/>
</dbReference>
<dbReference type="NCBIfam" id="NF011850">
    <property type="entry name" value="PRK15322.1"/>
    <property type="match status" value="1"/>
</dbReference>
<name>SCTL1_SALTY</name>
<proteinExistence type="evidence at protein level"/>
<comment type="function">
    <text evidence="1 2 5">Component of the type III secretion system (T3SS), also called injectisome, which is used to inject bacterial effector proteins into eukaryotic host cells (PubMed:28283062). Acts as a regulator of the InvC/SctN1 ATPase activity (By similarity). Required for invasion and secretion (PubMed:10816487).</text>
</comment>
<comment type="subunit">
    <text evidence="3 4 5 6 7">The core secretion machinery of the T3SS is composed of approximately 20 different proteins, including cytoplasmic components, a base, an export apparatus and a needle (PubMed:28283062, PubMed:30107569). This subunit is part of the cytosolic complex (PubMed:28283062, PubMed:31288030). Interacts directly with InvC/SctN1 (T3SS-1 ATPase) and SpaO/SctQ (the major sorting platform component) (PubMed:15060043, PubMed:25994170, PubMed:28283062, PubMed:31288030). Forms homodimers (PubMed:31288030).</text>
</comment>
<comment type="subcellular location">
    <subcellularLocation>
        <location evidence="5">Cytoplasm</location>
    </subcellularLocation>
</comment>
<comment type="disruption phenotype">
    <text evidence="4">Deletion of the gene disrupts proper SpaO/SctQ localization.</text>
</comment>
<evidence type="ECO:0000250" key="1">
    <source>
        <dbReference type="UniProtKB" id="Q99PY0"/>
    </source>
</evidence>
<evidence type="ECO:0000269" key="2">
    <source>
    </source>
</evidence>
<evidence type="ECO:0000269" key="3">
    <source>
    </source>
</evidence>
<evidence type="ECO:0000269" key="4">
    <source>
    </source>
</evidence>
<evidence type="ECO:0000269" key="5">
    <source>
    </source>
</evidence>
<evidence type="ECO:0000269" key="6">
    <source>
    </source>
</evidence>
<evidence type="ECO:0000269" key="7">
    <source>
    </source>
</evidence>
<evidence type="ECO:0000303" key="8">
    <source>
    </source>
</evidence>
<evidence type="ECO:0000303" key="9">
    <source>
    </source>
</evidence>
<evidence type="ECO:0000305" key="10"/>
<evidence type="ECO:0007744" key="11">
    <source>
        <dbReference type="PDB" id="4YX7"/>
    </source>
</evidence>
<evidence type="ECO:0007744" key="12">
    <source>
        <dbReference type="PDB" id="4YXA"/>
    </source>
</evidence>
<evidence type="ECO:0007829" key="13">
    <source>
        <dbReference type="PDB" id="4YX7"/>
    </source>
</evidence>
<reference key="1">
    <citation type="journal article" date="2001" name="Nature">
        <title>Complete genome sequence of Salmonella enterica serovar Typhimurium LT2.</title>
        <authorList>
            <person name="McClelland M."/>
            <person name="Sanderson K.E."/>
            <person name="Spieth J."/>
            <person name="Clifton S.W."/>
            <person name="Latreille P."/>
            <person name="Courtney L."/>
            <person name="Porwollik S."/>
            <person name="Ali J."/>
            <person name="Dante M."/>
            <person name="Du F."/>
            <person name="Hou S."/>
            <person name="Layman D."/>
            <person name="Leonard S."/>
            <person name="Nguyen C."/>
            <person name="Scott K."/>
            <person name="Holmes A."/>
            <person name="Grewal N."/>
            <person name="Mulvaney E."/>
            <person name="Ryan E."/>
            <person name="Sun H."/>
            <person name="Florea L."/>
            <person name="Miller W."/>
            <person name="Stoneking T."/>
            <person name="Nhan M."/>
            <person name="Waterston R."/>
            <person name="Wilson R.K."/>
        </authorList>
    </citation>
    <scope>NUCLEOTIDE SEQUENCE [LARGE SCALE GENOMIC DNA]</scope>
    <source>
        <strain>LT2 / SGSC1412 / ATCC 700720</strain>
    </source>
</reference>
<reference key="2">
    <citation type="journal article" date="1998" name="Microbiol. Mol. Biol. Rev.">
        <title>Type III protein secretion systems in bacterial pathogens of animals and plants.</title>
        <authorList>
            <person name="Hueck C.J."/>
        </authorList>
    </citation>
    <scope>REVIEW</scope>
    <scope>NOMENCLATURE</scope>
</reference>
<reference key="3">
    <citation type="journal article" date="2000" name="Infect. Immun.">
        <title>Transcriptional organization and function of invasion genes within Salmonella enterica serovar Typhimurium pathogenicity island 1, including the prgH, prgI, prgJ, prgK, orgA, orgB, and orgC genes.</title>
        <authorList>
            <person name="Klein J.R."/>
            <person name="Fahlen T.F."/>
            <person name="Jones B.D."/>
        </authorList>
    </citation>
    <scope>FUNCTION</scope>
    <source>
        <strain>SL1344</strain>
    </source>
</reference>
<reference key="4">
    <citation type="journal article" date="2004" name="J. Bacteriol.">
        <title>Genetic analysis of the Salmonella enterica type III secretion-associated ATPase InvC defines discrete functional domains.</title>
        <authorList>
            <person name="Akeda Y."/>
            <person name="Galan J.E."/>
        </authorList>
    </citation>
    <scope>INTERACTION WITH INVC/SCTN1</scope>
    <source>
        <strain>SL1344</strain>
    </source>
</reference>
<reference key="5">
    <citation type="journal article" date="2017" name="Cell">
        <title>In situ molecular architecture of the Salmonella type III secretion machine.</title>
        <authorList>
            <person name="Hu B."/>
            <person name="Lara-Tejero M."/>
            <person name="Kong Q."/>
            <person name="Galan J.E."/>
            <person name="Liu J."/>
        </authorList>
    </citation>
    <scope>FUNCTION</scope>
    <scope>SUBUNIT</scope>
    <scope>INTERACTION WITH INVC/SCTN1</scope>
    <scope>SUBCELLULAR LOCATION</scope>
    <scope>CRYO-ELECTRON TOMOGRAPHY</scope>
</reference>
<reference key="6">
    <citation type="journal article" date="2018" name="FEMS Microbiol. Lett.">
        <title>Bacterial type III secretion systems: a complex device for the delivery of bacterial effector proteins into eukaryotic host cells.</title>
        <authorList>
            <person name="Wagner S."/>
            <person name="Grin I."/>
            <person name="Malmsheimer S."/>
            <person name="Singh N."/>
            <person name="Torres-Vargas C.E."/>
            <person name="Westerhausen S."/>
        </authorList>
    </citation>
    <scope>REVIEW</scope>
    <scope>SUBUNIT</scope>
</reference>
<reference key="7">
    <citation type="journal article" date="2019" name="J. Mol. Biol.">
        <title>Molecular organization of soluble type III secretion system sorting platform complexes.</title>
        <authorList>
            <person name="Bernal I."/>
            <person name="Boernicke J."/>
            <person name="Heidemann J."/>
            <person name="Svergun D."/>
            <person name="Horstmann J.A."/>
            <person name="Erhardt M."/>
            <person name="Tuukkanen A."/>
            <person name="Uetrecht C."/>
            <person name="Kolbe M."/>
        </authorList>
    </citation>
    <scope>SUBUNIT</scope>
    <scope>INTERACTION WITH INVC/SCTN1</scope>
</reference>
<reference evidence="11 12" key="8">
    <citation type="journal article" date="2015" name="Nat. Commun.">
        <title>A common assembly module in injectisome and flagellar type III secretion sorting platforms.</title>
        <authorList>
            <person name="Notti R.Q."/>
            <person name="Bhattacharya S."/>
            <person name="Lilic M."/>
            <person name="Stebbins C.E."/>
        </authorList>
    </citation>
    <scope>X-RAY CRYSTALLOGRAPHY (2.00 ANGSTROMS) OF 1-30 IN COMPLEXES WITH SPAO/SCTQ</scope>
    <scope>DISRUPTION PHENOTYPE</scope>
    <scope>MUTAGENESIS OF 17-ILE--ILE-19</scope>
</reference>
<sequence length="226" mass="26462">MLKNIPIPSPLSPVEGILIKRKTLERYFSIERLEQQAHQRAKRILREAEEEAKTLRMYAYQEGYEQGMIDALQQVAAYLTDNQTMAWKWMEKIQIYARELFSAAVDHPETLLTVLDEWLRDFDKPEGQLFLTLPVNAKKDHQKLMVLLMENWPGTFNLKYHQEQRFIMSCGDQIAEFSPEQFVETAVGVIKHHLDELPQDCRTISDNAINALIDEWKTKTQAEVIR</sequence>
<keyword id="KW-0002">3D-structure</keyword>
<keyword id="KW-0963">Cytoplasm</keyword>
<keyword id="KW-0653">Protein transport</keyword>
<keyword id="KW-1185">Reference proteome</keyword>
<keyword id="KW-0813">Transport</keyword>
<keyword id="KW-0843">Virulence</keyword>
<accession>P0CL45</accession>
<accession>P40823</accession>
<accession>P58654</accession>